<comment type="function">
    <text evidence="1">Increases the formation of ribosomal termination complexes and stimulates activities of RF-1 and RF-2. It binds guanine nucleotides and has strong preference for UGA stop codons. It may interact directly with the ribosome. The stimulation of RF-1 and RF-2 is significantly reduced by GTP and GDP, but not by GMP.</text>
</comment>
<comment type="subcellular location">
    <subcellularLocation>
        <location evidence="1">Cytoplasm</location>
    </subcellularLocation>
</comment>
<comment type="similarity">
    <text evidence="1">Belongs to the TRAFAC class translation factor GTPase superfamily. Classic translation factor GTPase family. PrfC subfamily.</text>
</comment>
<protein>
    <recommendedName>
        <fullName evidence="1">Peptide chain release factor 3</fullName>
        <shortName evidence="1">RF-3</shortName>
    </recommendedName>
</protein>
<reference key="1">
    <citation type="journal article" date="2009" name="J. Bacteriol.">
        <title>Role of conjugative elements in the evolution of the multidrug-resistant pandemic clone Streptococcus pneumoniae Spain23F ST81.</title>
        <authorList>
            <person name="Croucher N.J."/>
            <person name="Walker D."/>
            <person name="Romero P."/>
            <person name="Lennard N."/>
            <person name="Paterson G.K."/>
            <person name="Bason N.C."/>
            <person name="Mitchell A.M."/>
            <person name="Quail M.A."/>
            <person name="Andrew P.W."/>
            <person name="Parkhill J."/>
            <person name="Bentley S.D."/>
            <person name="Mitchell T.J."/>
        </authorList>
    </citation>
    <scope>NUCLEOTIDE SEQUENCE [LARGE SCALE GENOMIC DNA]</scope>
    <source>
        <strain>ATCC 700669 / Spain 23F-1</strain>
    </source>
</reference>
<sequence length="514" mass="58482">MNIQEEIKKRRTFAIISHPDAGKTTITEQLLYFGGEIREAGTVKGKKTGTFAKSDWMDIEKQRGISVTSSVMQFDYDGKRVNILDTPGHEDFSEDTYRTLMAVDAAVMVVDSAKGIEAQTKKLFEVVKHRGIPVFTFMNKLDRDGREPLDLLQELEEILGIASYPMNWPIGMGKAFEGLYDLYNQRLELYKGDERFASLEDGDKLFGSNPFYEQVKDDIELLNEAGNEFSEEAILAGELTPVFFGSALTNFGVQTFLEIFLKFAPEPHGHKKTDGEIVDPYDKDFSGFVFKIQANMDPRHRDRIAFVRIVSGEFERGMSVNLPRTGKGAKLSNVTQFMAESRENVINAVAGDIIGVYDTGTYQVGDTLTVGKNKFEFEPLPTFTPEIFMKVSAKNVMKQKSFHKGIEQLVQEGAVQLYKNYQTGEYMLGAVGQLQFEVFKHRMEGEYNAEVVMSPMGKKTVRWIKPEDLDERMSSSRNILAKDRFDQPVFLFENDFALRWFADKYPDVELEEKM</sequence>
<evidence type="ECO:0000255" key="1">
    <source>
        <dbReference type="HAMAP-Rule" id="MF_00072"/>
    </source>
</evidence>
<proteinExistence type="inferred from homology"/>
<dbReference type="EMBL" id="FM211187">
    <property type="protein sequence ID" value="CAR68261.1"/>
    <property type="molecule type" value="Genomic_DNA"/>
</dbReference>
<dbReference type="RefSeq" id="WP_001025419.1">
    <property type="nucleotide sequence ID" value="NC_011900.1"/>
</dbReference>
<dbReference type="SMR" id="B8ZLK3"/>
<dbReference type="KEGG" id="sne:SPN23F04120"/>
<dbReference type="HOGENOM" id="CLU_002794_2_1_9"/>
<dbReference type="GO" id="GO:0005829">
    <property type="term" value="C:cytosol"/>
    <property type="evidence" value="ECO:0007669"/>
    <property type="project" value="TreeGrafter"/>
</dbReference>
<dbReference type="GO" id="GO:0005525">
    <property type="term" value="F:GTP binding"/>
    <property type="evidence" value="ECO:0007669"/>
    <property type="project" value="UniProtKB-UniRule"/>
</dbReference>
<dbReference type="GO" id="GO:0003924">
    <property type="term" value="F:GTPase activity"/>
    <property type="evidence" value="ECO:0007669"/>
    <property type="project" value="InterPro"/>
</dbReference>
<dbReference type="GO" id="GO:0016150">
    <property type="term" value="F:translation release factor activity, codon nonspecific"/>
    <property type="evidence" value="ECO:0007669"/>
    <property type="project" value="TreeGrafter"/>
</dbReference>
<dbReference type="GO" id="GO:0016149">
    <property type="term" value="F:translation release factor activity, codon specific"/>
    <property type="evidence" value="ECO:0007669"/>
    <property type="project" value="UniProtKB-UniRule"/>
</dbReference>
<dbReference type="GO" id="GO:0006449">
    <property type="term" value="P:regulation of translational termination"/>
    <property type="evidence" value="ECO:0007669"/>
    <property type="project" value="UniProtKB-UniRule"/>
</dbReference>
<dbReference type="CDD" id="cd04169">
    <property type="entry name" value="RF3"/>
    <property type="match status" value="1"/>
</dbReference>
<dbReference type="CDD" id="cd16259">
    <property type="entry name" value="RF3_III"/>
    <property type="match status" value="1"/>
</dbReference>
<dbReference type="FunFam" id="2.40.30.10:FF:000040">
    <property type="entry name" value="Peptide chain release factor 3"/>
    <property type="match status" value="1"/>
</dbReference>
<dbReference type="FunFam" id="3.30.70.3280:FF:000001">
    <property type="entry name" value="Peptide chain release factor 3"/>
    <property type="match status" value="1"/>
</dbReference>
<dbReference type="FunFam" id="3.40.50.300:FF:000542">
    <property type="entry name" value="Peptide chain release factor 3"/>
    <property type="match status" value="1"/>
</dbReference>
<dbReference type="Gene3D" id="3.40.50.300">
    <property type="entry name" value="P-loop containing nucleotide triphosphate hydrolases"/>
    <property type="match status" value="1"/>
</dbReference>
<dbReference type="Gene3D" id="3.30.70.3280">
    <property type="entry name" value="Peptide chain release factor 3, domain III"/>
    <property type="match status" value="1"/>
</dbReference>
<dbReference type="Gene3D" id="2.40.30.10">
    <property type="entry name" value="Translation factors"/>
    <property type="match status" value="1"/>
</dbReference>
<dbReference type="HAMAP" id="MF_00072">
    <property type="entry name" value="Rel_fac_3"/>
    <property type="match status" value="1"/>
</dbReference>
<dbReference type="InterPro" id="IPR053905">
    <property type="entry name" value="EF-G-like_DII"/>
</dbReference>
<dbReference type="InterPro" id="IPR035647">
    <property type="entry name" value="EFG_III/V"/>
</dbReference>
<dbReference type="InterPro" id="IPR031157">
    <property type="entry name" value="G_TR_CS"/>
</dbReference>
<dbReference type="InterPro" id="IPR027417">
    <property type="entry name" value="P-loop_NTPase"/>
</dbReference>
<dbReference type="InterPro" id="IPR004548">
    <property type="entry name" value="PrfC"/>
</dbReference>
<dbReference type="InterPro" id="IPR032090">
    <property type="entry name" value="RF3_C"/>
</dbReference>
<dbReference type="InterPro" id="IPR038467">
    <property type="entry name" value="RF3_dom_3_sf"/>
</dbReference>
<dbReference type="InterPro" id="IPR041732">
    <property type="entry name" value="RF3_GTP-bd"/>
</dbReference>
<dbReference type="InterPro" id="IPR005225">
    <property type="entry name" value="Small_GTP-bd"/>
</dbReference>
<dbReference type="InterPro" id="IPR000795">
    <property type="entry name" value="T_Tr_GTP-bd_dom"/>
</dbReference>
<dbReference type="InterPro" id="IPR009000">
    <property type="entry name" value="Transl_B-barrel_sf"/>
</dbReference>
<dbReference type="NCBIfam" id="TIGR00503">
    <property type="entry name" value="prfC"/>
    <property type="match status" value="1"/>
</dbReference>
<dbReference type="NCBIfam" id="NF001964">
    <property type="entry name" value="PRK00741.1"/>
    <property type="match status" value="1"/>
</dbReference>
<dbReference type="NCBIfam" id="TIGR00231">
    <property type="entry name" value="small_GTP"/>
    <property type="match status" value="1"/>
</dbReference>
<dbReference type="PANTHER" id="PTHR43556">
    <property type="entry name" value="PEPTIDE CHAIN RELEASE FACTOR RF3"/>
    <property type="match status" value="1"/>
</dbReference>
<dbReference type="PANTHER" id="PTHR43556:SF2">
    <property type="entry name" value="PEPTIDE CHAIN RELEASE FACTOR RF3"/>
    <property type="match status" value="1"/>
</dbReference>
<dbReference type="Pfam" id="PF22042">
    <property type="entry name" value="EF-G_D2"/>
    <property type="match status" value="1"/>
</dbReference>
<dbReference type="Pfam" id="PF00009">
    <property type="entry name" value="GTP_EFTU"/>
    <property type="match status" value="1"/>
</dbReference>
<dbReference type="Pfam" id="PF16658">
    <property type="entry name" value="RF3_C"/>
    <property type="match status" value="1"/>
</dbReference>
<dbReference type="PRINTS" id="PR00315">
    <property type="entry name" value="ELONGATNFCT"/>
</dbReference>
<dbReference type="PRINTS" id="PR01037">
    <property type="entry name" value="TCRTETOQM"/>
</dbReference>
<dbReference type="SUPFAM" id="SSF54980">
    <property type="entry name" value="EF-G C-terminal domain-like"/>
    <property type="match status" value="1"/>
</dbReference>
<dbReference type="SUPFAM" id="SSF52540">
    <property type="entry name" value="P-loop containing nucleoside triphosphate hydrolases"/>
    <property type="match status" value="1"/>
</dbReference>
<dbReference type="SUPFAM" id="SSF50447">
    <property type="entry name" value="Translation proteins"/>
    <property type="match status" value="1"/>
</dbReference>
<dbReference type="PROSITE" id="PS00301">
    <property type="entry name" value="G_TR_1"/>
    <property type="match status" value="1"/>
</dbReference>
<dbReference type="PROSITE" id="PS51722">
    <property type="entry name" value="G_TR_2"/>
    <property type="match status" value="1"/>
</dbReference>
<keyword id="KW-0963">Cytoplasm</keyword>
<keyword id="KW-0342">GTP-binding</keyword>
<keyword id="KW-0547">Nucleotide-binding</keyword>
<keyword id="KW-0648">Protein biosynthesis</keyword>
<gene>
    <name evidence="1" type="primary">prfC</name>
    <name type="ordered locus">SPN23F04120</name>
</gene>
<name>RF3_STRPJ</name>
<organism>
    <name type="scientific">Streptococcus pneumoniae (strain ATCC 700669 / Spain 23F-1)</name>
    <dbReference type="NCBI Taxonomy" id="561276"/>
    <lineage>
        <taxon>Bacteria</taxon>
        <taxon>Bacillati</taxon>
        <taxon>Bacillota</taxon>
        <taxon>Bacilli</taxon>
        <taxon>Lactobacillales</taxon>
        <taxon>Streptococcaceae</taxon>
        <taxon>Streptococcus</taxon>
    </lineage>
</organism>
<feature type="chain" id="PRO_1000193537" description="Peptide chain release factor 3">
    <location>
        <begin position="1"/>
        <end position="514"/>
    </location>
</feature>
<feature type="domain" description="tr-type G">
    <location>
        <begin position="8"/>
        <end position="268"/>
    </location>
</feature>
<feature type="binding site" evidence="1">
    <location>
        <begin position="17"/>
        <end position="24"/>
    </location>
    <ligand>
        <name>GTP</name>
        <dbReference type="ChEBI" id="CHEBI:37565"/>
    </ligand>
</feature>
<feature type="binding site" evidence="1">
    <location>
        <begin position="85"/>
        <end position="89"/>
    </location>
    <ligand>
        <name>GTP</name>
        <dbReference type="ChEBI" id="CHEBI:37565"/>
    </ligand>
</feature>
<feature type="binding site" evidence="1">
    <location>
        <begin position="139"/>
        <end position="142"/>
    </location>
    <ligand>
        <name>GTP</name>
        <dbReference type="ChEBI" id="CHEBI:37565"/>
    </ligand>
</feature>
<accession>B8ZLK3</accession>